<protein>
    <recommendedName>
        <fullName evidence="2">Small ribosomal subunit protein eS19</fullName>
    </recommendedName>
    <alternativeName>
        <fullName>40S ribosomal protein S19</fullName>
    </alternativeName>
</protein>
<dbReference type="EMBL" id="AF153049">
    <property type="protein sequence ID" value="AAD34164.1"/>
    <property type="molecule type" value="mRNA"/>
</dbReference>
<dbReference type="SMR" id="Q9Y0H3"/>
<dbReference type="GO" id="GO:0022627">
    <property type="term" value="C:cytosolic small ribosomal subunit"/>
    <property type="evidence" value="ECO:0007669"/>
    <property type="project" value="TreeGrafter"/>
</dbReference>
<dbReference type="GO" id="GO:0005634">
    <property type="term" value="C:nucleus"/>
    <property type="evidence" value="ECO:0007669"/>
    <property type="project" value="UniProtKB-SubCell"/>
</dbReference>
<dbReference type="GO" id="GO:0003723">
    <property type="term" value="F:RNA binding"/>
    <property type="evidence" value="ECO:0007669"/>
    <property type="project" value="TreeGrafter"/>
</dbReference>
<dbReference type="GO" id="GO:0003735">
    <property type="term" value="F:structural constituent of ribosome"/>
    <property type="evidence" value="ECO:0007669"/>
    <property type="project" value="InterPro"/>
</dbReference>
<dbReference type="GO" id="GO:0000028">
    <property type="term" value="P:ribosomal small subunit assembly"/>
    <property type="evidence" value="ECO:0007669"/>
    <property type="project" value="TreeGrafter"/>
</dbReference>
<dbReference type="GO" id="GO:0006412">
    <property type="term" value="P:translation"/>
    <property type="evidence" value="ECO:0007669"/>
    <property type="project" value="InterPro"/>
</dbReference>
<dbReference type="FunFam" id="1.10.10.10:FF:000118">
    <property type="entry name" value="40S ribosomal protein S19"/>
    <property type="match status" value="1"/>
</dbReference>
<dbReference type="Gene3D" id="1.10.10.10">
    <property type="entry name" value="Winged helix-like DNA-binding domain superfamily/Winged helix DNA-binding domain"/>
    <property type="match status" value="1"/>
</dbReference>
<dbReference type="InterPro" id="IPR001266">
    <property type="entry name" value="Ribosomal_eS19"/>
</dbReference>
<dbReference type="InterPro" id="IPR018277">
    <property type="entry name" value="Ribosomal_eS19_CS"/>
</dbReference>
<dbReference type="InterPro" id="IPR036388">
    <property type="entry name" value="WH-like_DNA-bd_sf"/>
</dbReference>
<dbReference type="InterPro" id="IPR036390">
    <property type="entry name" value="WH_DNA-bd_sf"/>
</dbReference>
<dbReference type="PANTHER" id="PTHR11710">
    <property type="entry name" value="40S RIBOSOMAL PROTEIN S19"/>
    <property type="match status" value="1"/>
</dbReference>
<dbReference type="PANTHER" id="PTHR11710:SF0">
    <property type="entry name" value="40S RIBOSOMAL PROTEIN S19"/>
    <property type="match status" value="1"/>
</dbReference>
<dbReference type="Pfam" id="PF01090">
    <property type="entry name" value="Ribosomal_S19e"/>
    <property type="match status" value="1"/>
</dbReference>
<dbReference type="SMART" id="SM01413">
    <property type="entry name" value="Ribosomal_S19e"/>
    <property type="match status" value="1"/>
</dbReference>
<dbReference type="SUPFAM" id="SSF46785">
    <property type="entry name" value="Winged helix' DNA-binding domain"/>
    <property type="match status" value="1"/>
</dbReference>
<dbReference type="PROSITE" id="PS00628">
    <property type="entry name" value="RIBOSOMAL_S19E"/>
    <property type="match status" value="1"/>
</dbReference>
<feature type="chain" id="PRO_0000153817" description="Small ribosomal subunit protein eS19">
    <location>
        <begin position="1"/>
        <end position="145"/>
    </location>
</feature>
<evidence type="ECO:0000250" key="1">
    <source>
        <dbReference type="UniProtKB" id="P39019"/>
    </source>
</evidence>
<evidence type="ECO:0000305" key="2"/>
<proteinExistence type="evidence at transcript level"/>
<organism>
    <name type="scientific">Myxine glutinosa</name>
    <name type="common">Atlantic hagfish</name>
    <dbReference type="NCBI Taxonomy" id="7769"/>
    <lineage>
        <taxon>Eukaryota</taxon>
        <taxon>Metazoa</taxon>
        <taxon>Chordata</taxon>
        <taxon>Craniata</taxon>
        <taxon>Vertebrata</taxon>
        <taxon>Cyclostomata</taxon>
        <taxon>Myxini</taxon>
        <taxon>Myxiniformes</taxon>
        <taxon>Myxinidae</taxon>
        <taxon>Myxininae</taxon>
        <taxon>Myxine</taxon>
    </lineage>
</organism>
<comment type="function">
    <text evidence="1">Component of the small ribosomal subunit. The ribosome is a large ribonucleoprotein complex responsible for the synthesis of proteins in the cell. Required for pre-rRNA processing and maturation of 40S ribosomal subunits.</text>
</comment>
<comment type="subunit">
    <text evidence="1">Component of the small ribosomal subunit.</text>
</comment>
<comment type="subcellular location">
    <subcellularLocation>
        <location evidence="1">Cytoplasm</location>
    </subcellularLocation>
    <subcellularLocation>
        <location evidence="1">Nucleus</location>
    </subcellularLocation>
</comment>
<comment type="similarity">
    <text evidence="2">Belongs to the eukaryotic ribosomal protein eS19 family.</text>
</comment>
<gene>
    <name type="primary">rps19</name>
</gene>
<keyword id="KW-0963">Cytoplasm</keyword>
<keyword id="KW-0539">Nucleus</keyword>
<keyword id="KW-0687">Ribonucleoprotein</keyword>
<keyword id="KW-0689">Ribosomal protein</keyword>
<name>RS19_MYXGL</name>
<reference key="1">
    <citation type="submission" date="1999-05" db="EMBL/GenBank/DDBJ databases">
        <title>Atlantic hagfish cDNA sequence for the 40S ribosomal protein S19.</title>
        <authorList>
            <person name="White G.P."/>
            <person name="Cunningham C."/>
        </authorList>
    </citation>
    <scope>NUCLEOTIDE SEQUENCE [MRNA]</scope>
</reference>
<sequence>MPGYTVKDVNQQEFVKALAAFFKKSGKLKKPDWVDTVKLGKHKELAPFDIDWYYIRTASVARHLYMRGGVGVGAMTKIYGGRQRNGTRPSHYSRGSRNVARKVLQSLEMLKMVEKDPNGGRRLTSIGQRDMDRIAGQVVVLSKKH</sequence>
<accession>Q9Y0H3</accession>